<accession>A3D5L4</accession>
<dbReference type="EMBL" id="CP000563">
    <property type="protein sequence ID" value="ABN62027.1"/>
    <property type="molecule type" value="Genomic_DNA"/>
</dbReference>
<dbReference type="SMR" id="A3D5L4"/>
<dbReference type="STRING" id="325240.Sbal_2534"/>
<dbReference type="KEGG" id="sbl:Sbal_2534"/>
<dbReference type="HOGENOM" id="CLU_063050_0_1_6"/>
<dbReference type="OrthoDB" id="9131762at2"/>
<dbReference type="Proteomes" id="UP000001557">
    <property type="component" value="Chromosome"/>
</dbReference>
<dbReference type="GO" id="GO:0043590">
    <property type="term" value="C:bacterial nucleoid"/>
    <property type="evidence" value="ECO:0007669"/>
    <property type="project" value="TreeGrafter"/>
</dbReference>
<dbReference type="GO" id="GO:0005737">
    <property type="term" value="C:cytoplasm"/>
    <property type="evidence" value="ECO:0007669"/>
    <property type="project" value="UniProtKB-UniRule"/>
</dbReference>
<dbReference type="GO" id="GO:0003690">
    <property type="term" value="F:double-stranded DNA binding"/>
    <property type="evidence" value="ECO:0007669"/>
    <property type="project" value="TreeGrafter"/>
</dbReference>
<dbReference type="GO" id="GO:0003727">
    <property type="term" value="F:single-stranded RNA binding"/>
    <property type="evidence" value="ECO:0007669"/>
    <property type="project" value="TreeGrafter"/>
</dbReference>
<dbReference type="HAMAP" id="MF_00730">
    <property type="entry name" value="NdpA"/>
    <property type="match status" value="1"/>
</dbReference>
<dbReference type="InterPro" id="IPR007358">
    <property type="entry name" value="Nucleoid_associated_NdpA"/>
</dbReference>
<dbReference type="NCBIfam" id="NF001557">
    <property type="entry name" value="PRK00378.1"/>
    <property type="match status" value="1"/>
</dbReference>
<dbReference type="PANTHER" id="PTHR38772">
    <property type="match status" value="1"/>
</dbReference>
<dbReference type="PANTHER" id="PTHR38772:SF1">
    <property type="entry name" value="NUCLEOID-ASSOCIATED PROTEIN YEJK"/>
    <property type="match status" value="1"/>
</dbReference>
<dbReference type="Pfam" id="PF04245">
    <property type="entry name" value="NA37"/>
    <property type="match status" value="1"/>
</dbReference>
<protein>
    <recommendedName>
        <fullName evidence="1">Nucleoid-associated protein Sbal_2534</fullName>
    </recommendedName>
</protein>
<evidence type="ECO:0000255" key="1">
    <source>
        <dbReference type="HAMAP-Rule" id="MF_00730"/>
    </source>
</evidence>
<organism>
    <name type="scientific">Shewanella baltica (strain OS155 / ATCC BAA-1091)</name>
    <dbReference type="NCBI Taxonomy" id="325240"/>
    <lineage>
        <taxon>Bacteria</taxon>
        <taxon>Pseudomonadati</taxon>
        <taxon>Pseudomonadota</taxon>
        <taxon>Gammaproteobacteria</taxon>
        <taxon>Alteromonadales</taxon>
        <taxon>Shewanellaceae</taxon>
        <taxon>Shewanella</taxon>
    </lineage>
</organism>
<keyword id="KW-0963">Cytoplasm</keyword>
<keyword id="KW-1185">Reference proteome</keyword>
<name>NDPA_SHEB5</name>
<comment type="subcellular location">
    <subcellularLocation>
        <location evidence="1">Cytoplasm</location>
        <location evidence="1">Nucleoid</location>
    </subcellularLocation>
</comment>
<comment type="similarity">
    <text evidence="1">Belongs to the YejK family.</text>
</comment>
<proteinExistence type="inferred from homology"/>
<feature type="chain" id="PRO_1000045942" description="Nucleoid-associated protein Sbal_2534">
    <location>
        <begin position="1"/>
        <end position="342"/>
    </location>
</feature>
<sequence length="342" mass="38083">MSINIEHAIIHEISQDSQGQLRCRLRPQPLLNGQAVEVMLDELHQTYTGKAGKGFGYFGIHGDDGEANPAFANALTQYRGGDLGFVEFSGQASKLLQEELSKYDFSQGGFLLMSCYTSITSDYLFVALLSAKSSMTVLDDMELSQNNHLDLNNIQLAARIDLTEWQADKDSRKYISFIRGRAGRKVADFFLDFMGCVEGVNTKAQNKTLMNAVEDFVASSELTKDERQQCRNKVFEYCSERFDEGADIEIKDLADELADQGMDSFYDFARGGSYDLDEEFPADKSTLRQLKKFSGTGGGVTLSFDGGHLGQRVIYDPISDTILIKGVPANLKDQLDRRLKGE</sequence>
<reference key="1">
    <citation type="submission" date="2007-02" db="EMBL/GenBank/DDBJ databases">
        <title>Complete sequence of chromosome of Shewanella baltica OS155.</title>
        <authorList>
            <consortium name="US DOE Joint Genome Institute"/>
            <person name="Copeland A."/>
            <person name="Lucas S."/>
            <person name="Lapidus A."/>
            <person name="Barry K."/>
            <person name="Detter J.C."/>
            <person name="Glavina del Rio T."/>
            <person name="Hammon N."/>
            <person name="Israni S."/>
            <person name="Dalin E."/>
            <person name="Tice H."/>
            <person name="Pitluck S."/>
            <person name="Sims D.R."/>
            <person name="Brettin T."/>
            <person name="Bruce D."/>
            <person name="Han C."/>
            <person name="Tapia R."/>
            <person name="Brainard J."/>
            <person name="Schmutz J."/>
            <person name="Larimer F."/>
            <person name="Land M."/>
            <person name="Hauser L."/>
            <person name="Kyrpides N."/>
            <person name="Mikhailova N."/>
            <person name="Brettar I."/>
            <person name="Klappenbach J."/>
            <person name="Konstantinidis K."/>
            <person name="Rodrigues J."/>
            <person name="Tiedje J."/>
            <person name="Richardson P."/>
        </authorList>
    </citation>
    <scope>NUCLEOTIDE SEQUENCE [LARGE SCALE GENOMIC DNA]</scope>
    <source>
        <strain>OS155 / ATCC BAA-1091</strain>
    </source>
</reference>
<gene>
    <name type="ordered locus">Sbal_2534</name>
</gene>